<proteinExistence type="evidence at protein level"/>
<comment type="function">
    <text evidence="3">Catalyzes the hydrolysis of glutamine to glutamate and ammonia as part of the biosynthesis of pyridoxal 5'-phosphate. The resulting ammonia molecule is channeled to the active site of PdxS.</text>
</comment>
<comment type="catalytic activity">
    <reaction evidence="3">
        <text>aldehydo-D-ribose 5-phosphate + D-glyceraldehyde 3-phosphate + L-glutamine = pyridoxal 5'-phosphate + L-glutamate + phosphate + 3 H2O + H(+)</text>
        <dbReference type="Rhea" id="RHEA:31507"/>
        <dbReference type="ChEBI" id="CHEBI:15377"/>
        <dbReference type="ChEBI" id="CHEBI:15378"/>
        <dbReference type="ChEBI" id="CHEBI:29985"/>
        <dbReference type="ChEBI" id="CHEBI:43474"/>
        <dbReference type="ChEBI" id="CHEBI:58273"/>
        <dbReference type="ChEBI" id="CHEBI:58359"/>
        <dbReference type="ChEBI" id="CHEBI:59776"/>
        <dbReference type="ChEBI" id="CHEBI:597326"/>
        <dbReference type="EC" id="4.3.3.6"/>
    </reaction>
</comment>
<comment type="catalytic activity">
    <reaction evidence="3">
        <text>L-glutamine + H2O = L-glutamate + NH4(+)</text>
        <dbReference type="Rhea" id="RHEA:15889"/>
        <dbReference type="ChEBI" id="CHEBI:15377"/>
        <dbReference type="ChEBI" id="CHEBI:28938"/>
        <dbReference type="ChEBI" id="CHEBI:29985"/>
        <dbReference type="ChEBI" id="CHEBI:58359"/>
        <dbReference type="EC" id="3.5.1.2"/>
    </reaction>
</comment>
<comment type="pathway">
    <text>Cofactor biosynthesis; pyridoxal 5'-phosphate biosynthesis.</text>
</comment>
<comment type="subunit">
    <text evidence="2">In the presence of PdxS, forms a dodecamer of heterodimers. Only shows activity in the heterodimer.</text>
</comment>
<comment type="similarity">
    <text evidence="5">Belongs to the glutaminase PdxT/SNO family.</text>
</comment>
<dbReference type="EC" id="4.3.3.6" evidence="3"/>
<dbReference type="EC" id="3.5.1.2" evidence="3"/>
<dbReference type="EMBL" id="DQ077732">
    <property type="protein sequence ID" value="AAY83290.1"/>
    <property type="molecule type" value="mRNA"/>
</dbReference>
<dbReference type="SMR" id="Q4PJX5"/>
<dbReference type="MEROPS" id="C26.A35"/>
<dbReference type="VEuPathDB" id="PlasmoDB:PBANKA_0931800"/>
<dbReference type="HOGENOM" id="CLU_069674_0_0_1"/>
<dbReference type="OMA" id="GMIMLAD"/>
<dbReference type="OrthoDB" id="2039at2759"/>
<dbReference type="UniPathway" id="UPA00245"/>
<dbReference type="GO" id="GO:0005829">
    <property type="term" value="C:cytosol"/>
    <property type="evidence" value="ECO:0007669"/>
    <property type="project" value="TreeGrafter"/>
</dbReference>
<dbReference type="GO" id="GO:1903600">
    <property type="term" value="C:glutaminase complex"/>
    <property type="evidence" value="ECO:0007669"/>
    <property type="project" value="TreeGrafter"/>
</dbReference>
<dbReference type="GO" id="GO:0004359">
    <property type="term" value="F:glutaminase activity"/>
    <property type="evidence" value="ECO:0007669"/>
    <property type="project" value="UniProtKB-EC"/>
</dbReference>
<dbReference type="GO" id="GO:0036381">
    <property type="term" value="F:pyridoxal 5'-phosphate synthase (glutamine hydrolysing) activity"/>
    <property type="evidence" value="ECO:0007669"/>
    <property type="project" value="UniProtKB-EC"/>
</dbReference>
<dbReference type="GO" id="GO:0042823">
    <property type="term" value="P:pyridoxal phosphate biosynthetic process"/>
    <property type="evidence" value="ECO:0007669"/>
    <property type="project" value="UniProtKB-UniPathway"/>
</dbReference>
<dbReference type="GO" id="GO:0008614">
    <property type="term" value="P:pyridoxine metabolic process"/>
    <property type="evidence" value="ECO:0007669"/>
    <property type="project" value="TreeGrafter"/>
</dbReference>
<dbReference type="Gene3D" id="3.40.50.880">
    <property type="match status" value="1"/>
</dbReference>
<dbReference type="InterPro" id="IPR029062">
    <property type="entry name" value="Class_I_gatase-like"/>
</dbReference>
<dbReference type="InterPro" id="IPR002161">
    <property type="entry name" value="PdxT/SNO"/>
</dbReference>
<dbReference type="InterPro" id="IPR021196">
    <property type="entry name" value="PdxT/SNO_CS"/>
</dbReference>
<dbReference type="NCBIfam" id="TIGR03800">
    <property type="entry name" value="PLP_synth_Pdx2"/>
    <property type="match status" value="1"/>
</dbReference>
<dbReference type="PANTHER" id="PTHR31559">
    <property type="entry name" value="PYRIDOXAL 5'-PHOSPHATE SYNTHASE SUBUNIT SNO"/>
    <property type="match status" value="1"/>
</dbReference>
<dbReference type="PANTHER" id="PTHR31559:SF0">
    <property type="entry name" value="PYRIDOXAL 5'-PHOSPHATE SYNTHASE SUBUNIT SNO1-RELATED"/>
    <property type="match status" value="1"/>
</dbReference>
<dbReference type="Pfam" id="PF01174">
    <property type="entry name" value="SNO"/>
    <property type="match status" value="1"/>
</dbReference>
<dbReference type="PIRSF" id="PIRSF005639">
    <property type="entry name" value="Glut_amidoT_SNO"/>
    <property type="match status" value="1"/>
</dbReference>
<dbReference type="SUPFAM" id="SSF52317">
    <property type="entry name" value="Class I glutamine amidotransferase-like"/>
    <property type="match status" value="1"/>
</dbReference>
<dbReference type="PROSITE" id="PS01236">
    <property type="entry name" value="PDXT_SNO_1"/>
    <property type="match status" value="1"/>
</dbReference>
<dbReference type="PROSITE" id="PS51130">
    <property type="entry name" value="PDXT_SNO_2"/>
    <property type="match status" value="1"/>
</dbReference>
<organism>
    <name type="scientific">Plasmodium berghei</name>
    <dbReference type="NCBI Taxonomy" id="5821"/>
    <lineage>
        <taxon>Eukaryota</taxon>
        <taxon>Sar</taxon>
        <taxon>Alveolata</taxon>
        <taxon>Apicomplexa</taxon>
        <taxon>Aconoidasida</taxon>
        <taxon>Haemosporida</taxon>
        <taxon>Plasmodiidae</taxon>
        <taxon>Plasmodium</taxon>
        <taxon>Plasmodium (Vinckeia)</taxon>
    </lineage>
</organism>
<keyword id="KW-0315">Glutamine amidotransferase</keyword>
<keyword id="KW-0378">Hydrolase</keyword>
<keyword id="KW-0456">Lyase</keyword>
<keyword id="KW-0663">Pyridoxal phosphate</keyword>
<evidence type="ECO:0000250" key="1">
    <source>
        <dbReference type="UniProtKB" id="P37528"/>
    </source>
</evidence>
<evidence type="ECO:0000250" key="2">
    <source>
        <dbReference type="UniProtKB" id="Q8IIK4"/>
    </source>
</evidence>
<evidence type="ECO:0000269" key="3">
    <source>
    </source>
</evidence>
<evidence type="ECO:0000303" key="4">
    <source>
    </source>
</evidence>
<evidence type="ECO:0000305" key="5"/>
<feature type="chain" id="PRO_0000431779" description="Pyridoxal 5'-phosphate synthase subunit Pdx2">
    <location>
        <begin position="1"/>
        <end position="226"/>
    </location>
</feature>
<feature type="active site" description="Nucleophile" evidence="1">
    <location>
        <position position="87"/>
    </location>
</feature>
<feature type="active site" description="Charge relay system" evidence="1">
    <location>
        <position position="199"/>
    </location>
</feature>
<feature type="active site" description="Charge relay system" evidence="1">
    <location>
        <position position="201"/>
    </location>
</feature>
<feature type="binding site" evidence="1">
    <location>
        <begin position="52"/>
        <end position="54"/>
    </location>
    <ligand>
        <name>L-glutamine</name>
        <dbReference type="ChEBI" id="CHEBI:58359"/>
    </ligand>
</feature>
<feature type="binding site" evidence="1">
    <location>
        <position position="124"/>
    </location>
    <ligand>
        <name>L-glutamine</name>
        <dbReference type="ChEBI" id="CHEBI:58359"/>
    </ligand>
</feature>
<feature type="binding site" evidence="1">
    <location>
        <begin position="156"/>
        <end position="157"/>
    </location>
    <ligand>
        <name>L-glutamine</name>
        <dbReference type="ChEBI" id="CHEBI:58359"/>
    </ligand>
</feature>
<sequence>MEKLTIGVLSLQGNFQSHINHFLQLQNPSLKVIEVRNKTNLRECDGIVIPGGESTTLRKCMSYDNDSLYNALKNYIHVKKKPVWGTCAGCILLSEKVEKNKDDNIENEYGNDFSLGGLDIEITRNYYGSQNDSFICSLDIKSQDPIFKKNIRAPCIRAPFIKKISSDKVVTIATFSHESFGKNIIGAVEQDNCMGTIFHPELMPYTCFHDYFLEKVKKHIKDSREA</sequence>
<name>PDX2_PLABE</name>
<protein>
    <recommendedName>
        <fullName>Pyridoxal 5'-phosphate synthase subunit Pdx2</fullName>
        <ecNumber evidence="3">4.3.3.6</ecNumber>
    </recommendedName>
    <alternativeName>
        <fullName>Pyridoxal 5'-phosphate synthase glutaminase subunit</fullName>
        <ecNumber evidence="3">3.5.1.2</ecNumber>
    </alternativeName>
</protein>
<accession>Q4PJX5</accession>
<reference key="1">
    <citation type="journal article" date="2006" name="J. Biol. Chem.">
        <title>Vitamin B6 biosynthesis by the malaria parasite Plasmodium falciparum: biochemical and structural insights.</title>
        <authorList>
            <person name="Gengenbacher M."/>
            <person name="Fitzpatrick T.B."/>
            <person name="Raschle T."/>
            <person name="Flicker K."/>
            <person name="Sinning I."/>
            <person name="Muller S."/>
            <person name="Macheroux P."/>
            <person name="Tews I."/>
            <person name="Kappes B."/>
        </authorList>
    </citation>
    <scope>NUCLEOTIDE SEQUENCE [MRNA]</scope>
    <source>
        <strain>NK65</strain>
    </source>
</reference>
<reference key="2">
    <citation type="journal article" date="2012" name="Structure">
        <title>Assembly of the eukaryotic PLP-synthase complex from Plasmodium and activation of the Pdx1 enzyme.</title>
        <authorList>
            <person name="Guedez G."/>
            <person name="Hipp K."/>
            <person name="Windeisen V."/>
            <person name="Derrer B."/>
            <person name="Gengenbacher M."/>
            <person name="Bottcher B."/>
            <person name="Sinning I."/>
            <person name="Kappes B."/>
            <person name="Tews I."/>
        </authorList>
    </citation>
    <scope>FUNCTION</scope>
    <scope>CATALYTIC ACTIVITY</scope>
    <source>
        <strain>NK65</strain>
    </source>
</reference>
<gene>
    <name evidence="4" type="primary">pdx2</name>
</gene>